<protein>
    <recommendedName>
        <fullName evidence="1">UPF0397 protein VVA0348</fullName>
    </recommendedName>
</protein>
<sequence>MNLSAKTVVVIAIGAALYGIGGLPMFGIPVFANTTLKPAMAVLALFSVLFGPLVGFLVGFIGHWVTDLFAGWGVWLTWVLGSGIVGLIIGLFPSLTRNRLEKGEFNLKDFSLFVVLALLGNVFGYGCSAFLDTILYAEPFTKVFTQLTIIASGNTVLIAIVGYFILKSVAKRNKQSRNLTEA</sequence>
<keyword id="KW-1003">Cell membrane</keyword>
<keyword id="KW-0472">Membrane</keyword>
<keyword id="KW-0812">Transmembrane</keyword>
<keyword id="KW-1133">Transmembrane helix</keyword>
<comment type="subcellular location">
    <subcellularLocation>
        <location evidence="1">Cell membrane</location>
        <topology evidence="1">Multi-pass membrane protein</topology>
    </subcellularLocation>
</comment>
<comment type="similarity">
    <text evidence="1">Belongs to the UPF0397 family.</text>
</comment>
<name>Y4348_VIBVY</name>
<proteinExistence type="inferred from homology"/>
<feature type="chain" id="PRO_0000260821" description="UPF0397 protein VVA0348">
    <location>
        <begin position="1"/>
        <end position="182"/>
    </location>
</feature>
<feature type="transmembrane region" description="Helical" evidence="1">
    <location>
        <begin position="8"/>
        <end position="28"/>
    </location>
</feature>
<feature type="transmembrane region" description="Helical" evidence="1">
    <location>
        <begin position="41"/>
        <end position="61"/>
    </location>
</feature>
<feature type="transmembrane region" description="Helical" evidence="1">
    <location>
        <begin position="72"/>
        <end position="92"/>
    </location>
</feature>
<feature type="transmembrane region" description="Helical" evidence="1">
    <location>
        <begin position="110"/>
        <end position="130"/>
    </location>
</feature>
<feature type="transmembrane region" description="Helical" evidence="1">
    <location>
        <begin position="146"/>
        <end position="166"/>
    </location>
</feature>
<evidence type="ECO:0000255" key="1">
    <source>
        <dbReference type="HAMAP-Rule" id="MF_01572"/>
    </source>
</evidence>
<reference key="1">
    <citation type="journal article" date="2003" name="Genome Res.">
        <title>Comparative genome analysis of Vibrio vulnificus, a marine pathogen.</title>
        <authorList>
            <person name="Chen C.-Y."/>
            <person name="Wu K.-M."/>
            <person name="Chang Y.-C."/>
            <person name="Chang C.-H."/>
            <person name="Tsai H.-C."/>
            <person name="Liao T.-L."/>
            <person name="Liu Y.-M."/>
            <person name="Chen H.-J."/>
            <person name="Shen A.B.-T."/>
            <person name="Li J.-C."/>
            <person name="Su T.-L."/>
            <person name="Shao C.-P."/>
            <person name="Lee C.-T."/>
            <person name="Hor L.-I."/>
            <person name="Tsai S.-F."/>
        </authorList>
    </citation>
    <scope>NUCLEOTIDE SEQUENCE [LARGE SCALE GENOMIC DNA]</scope>
    <source>
        <strain>YJ016</strain>
    </source>
</reference>
<organism>
    <name type="scientific">Vibrio vulnificus (strain YJ016)</name>
    <dbReference type="NCBI Taxonomy" id="196600"/>
    <lineage>
        <taxon>Bacteria</taxon>
        <taxon>Pseudomonadati</taxon>
        <taxon>Pseudomonadota</taxon>
        <taxon>Gammaproteobacteria</taxon>
        <taxon>Vibrionales</taxon>
        <taxon>Vibrionaceae</taxon>
        <taxon>Vibrio</taxon>
    </lineage>
</organism>
<dbReference type="EMBL" id="BA000038">
    <property type="protein sequence ID" value="BAC96374.1"/>
    <property type="molecule type" value="Genomic_DNA"/>
</dbReference>
<dbReference type="RefSeq" id="WP_011082383.1">
    <property type="nucleotide sequence ID" value="NC_005140.1"/>
</dbReference>
<dbReference type="SMR" id="Q7MFH2"/>
<dbReference type="STRING" id="672.VV93_v1c33340"/>
<dbReference type="KEGG" id="vvy:VVA0348"/>
<dbReference type="eggNOG" id="COG4720">
    <property type="taxonomic scope" value="Bacteria"/>
</dbReference>
<dbReference type="HOGENOM" id="CLU_120023_0_0_6"/>
<dbReference type="Proteomes" id="UP000002675">
    <property type="component" value="Chromosome II"/>
</dbReference>
<dbReference type="GO" id="GO:0005886">
    <property type="term" value="C:plasma membrane"/>
    <property type="evidence" value="ECO:0007669"/>
    <property type="project" value="UniProtKB-SubCell"/>
</dbReference>
<dbReference type="Gene3D" id="1.10.1760.20">
    <property type="match status" value="1"/>
</dbReference>
<dbReference type="HAMAP" id="MF_01572">
    <property type="entry name" value="UPF0397"/>
    <property type="match status" value="1"/>
</dbReference>
<dbReference type="InterPro" id="IPR009825">
    <property type="entry name" value="ECF_substrate-spec-like"/>
</dbReference>
<dbReference type="InterPro" id="IPR022914">
    <property type="entry name" value="UPF0397"/>
</dbReference>
<dbReference type="NCBIfam" id="NF010182">
    <property type="entry name" value="PRK13661.1"/>
    <property type="match status" value="1"/>
</dbReference>
<dbReference type="PANTHER" id="PTHR37815">
    <property type="entry name" value="UPF0397 PROTEIN BC_2624-RELATED"/>
    <property type="match status" value="1"/>
</dbReference>
<dbReference type="PANTHER" id="PTHR37815:SF3">
    <property type="entry name" value="UPF0397 PROTEIN SPR0429"/>
    <property type="match status" value="1"/>
</dbReference>
<dbReference type="Pfam" id="PF07155">
    <property type="entry name" value="ECF-ribofla_trS"/>
    <property type="match status" value="1"/>
</dbReference>
<accession>Q7MFH2</accession>
<gene>
    <name type="ordered locus">VVA0348</name>
</gene>